<gene>
    <name evidence="1" type="primary">lepA</name>
    <name type="ordered locus">P9303_20941</name>
</gene>
<feature type="chain" id="PRO_1000032034" description="Elongation factor 4">
    <location>
        <begin position="1"/>
        <end position="604"/>
    </location>
</feature>
<feature type="domain" description="tr-type G">
    <location>
        <begin position="7"/>
        <end position="189"/>
    </location>
</feature>
<feature type="binding site" evidence="1">
    <location>
        <begin position="19"/>
        <end position="24"/>
    </location>
    <ligand>
        <name>GTP</name>
        <dbReference type="ChEBI" id="CHEBI:37565"/>
    </ligand>
</feature>
<feature type="binding site" evidence="1">
    <location>
        <begin position="136"/>
        <end position="139"/>
    </location>
    <ligand>
        <name>GTP</name>
        <dbReference type="ChEBI" id="CHEBI:37565"/>
    </ligand>
</feature>
<reference key="1">
    <citation type="journal article" date="2007" name="PLoS Genet.">
        <title>Patterns and implications of gene gain and loss in the evolution of Prochlorococcus.</title>
        <authorList>
            <person name="Kettler G.C."/>
            <person name="Martiny A.C."/>
            <person name="Huang K."/>
            <person name="Zucker J."/>
            <person name="Coleman M.L."/>
            <person name="Rodrigue S."/>
            <person name="Chen F."/>
            <person name="Lapidus A."/>
            <person name="Ferriera S."/>
            <person name="Johnson J."/>
            <person name="Steglich C."/>
            <person name="Church G.M."/>
            <person name="Richardson P."/>
            <person name="Chisholm S.W."/>
        </authorList>
    </citation>
    <scope>NUCLEOTIDE SEQUENCE [LARGE SCALE GENOMIC DNA]</scope>
    <source>
        <strain>MIT 9303</strain>
    </source>
</reference>
<organism>
    <name type="scientific">Prochlorococcus marinus (strain MIT 9303)</name>
    <dbReference type="NCBI Taxonomy" id="59922"/>
    <lineage>
        <taxon>Bacteria</taxon>
        <taxon>Bacillati</taxon>
        <taxon>Cyanobacteriota</taxon>
        <taxon>Cyanophyceae</taxon>
        <taxon>Synechococcales</taxon>
        <taxon>Prochlorococcaceae</taxon>
        <taxon>Prochlorococcus</taxon>
    </lineage>
</organism>
<evidence type="ECO:0000255" key="1">
    <source>
        <dbReference type="HAMAP-Rule" id="MF_00071"/>
    </source>
</evidence>
<dbReference type="EC" id="3.6.5.n1" evidence="1"/>
<dbReference type="EMBL" id="CP000554">
    <property type="protein sequence ID" value="ABM78829.1"/>
    <property type="molecule type" value="Genomic_DNA"/>
</dbReference>
<dbReference type="RefSeq" id="WP_011826706.1">
    <property type="nucleotide sequence ID" value="NC_008820.1"/>
</dbReference>
<dbReference type="SMR" id="A2CBG9"/>
<dbReference type="STRING" id="59922.P9303_20941"/>
<dbReference type="KEGG" id="pmf:P9303_20941"/>
<dbReference type="HOGENOM" id="CLU_009995_3_3_3"/>
<dbReference type="BioCyc" id="PMAR59922:G1G80-1829-MONOMER"/>
<dbReference type="Proteomes" id="UP000002274">
    <property type="component" value="Chromosome"/>
</dbReference>
<dbReference type="GO" id="GO:0005886">
    <property type="term" value="C:plasma membrane"/>
    <property type="evidence" value="ECO:0007669"/>
    <property type="project" value="UniProtKB-SubCell"/>
</dbReference>
<dbReference type="GO" id="GO:0005525">
    <property type="term" value="F:GTP binding"/>
    <property type="evidence" value="ECO:0007669"/>
    <property type="project" value="UniProtKB-KW"/>
</dbReference>
<dbReference type="GO" id="GO:0003924">
    <property type="term" value="F:GTPase activity"/>
    <property type="evidence" value="ECO:0007669"/>
    <property type="project" value="InterPro"/>
</dbReference>
<dbReference type="GO" id="GO:0043022">
    <property type="term" value="F:ribosome binding"/>
    <property type="evidence" value="ECO:0007669"/>
    <property type="project" value="TreeGrafter"/>
</dbReference>
<dbReference type="GO" id="GO:0045727">
    <property type="term" value="P:positive regulation of translation"/>
    <property type="evidence" value="ECO:0007669"/>
    <property type="project" value="TreeGrafter"/>
</dbReference>
<dbReference type="GO" id="GO:0006412">
    <property type="term" value="P:translation"/>
    <property type="evidence" value="ECO:0007669"/>
    <property type="project" value="UniProtKB-KW"/>
</dbReference>
<dbReference type="CDD" id="cd03699">
    <property type="entry name" value="EF4_II"/>
    <property type="match status" value="1"/>
</dbReference>
<dbReference type="CDD" id="cd16260">
    <property type="entry name" value="EF4_III"/>
    <property type="match status" value="1"/>
</dbReference>
<dbReference type="CDD" id="cd01890">
    <property type="entry name" value="LepA"/>
    <property type="match status" value="1"/>
</dbReference>
<dbReference type="CDD" id="cd03709">
    <property type="entry name" value="lepA_C"/>
    <property type="match status" value="1"/>
</dbReference>
<dbReference type="FunFam" id="3.40.50.300:FF:000078">
    <property type="entry name" value="Elongation factor 4"/>
    <property type="match status" value="1"/>
</dbReference>
<dbReference type="FunFam" id="2.40.30.10:FF:000015">
    <property type="entry name" value="Translation factor GUF1, mitochondrial"/>
    <property type="match status" value="1"/>
</dbReference>
<dbReference type="FunFam" id="3.30.70.240:FF:000007">
    <property type="entry name" value="Translation factor GUF1, mitochondrial"/>
    <property type="match status" value="1"/>
</dbReference>
<dbReference type="FunFam" id="3.30.70.2570:FF:000001">
    <property type="entry name" value="Translation factor GUF1, mitochondrial"/>
    <property type="match status" value="1"/>
</dbReference>
<dbReference type="FunFam" id="3.30.70.870:FF:000004">
    <property type="entry name" value="Translation factor GUF1, mitochondrial"/>
    <property type="match status" value="1"/>
</dbReference>
<dbReference type="Gene3D" id="3.30.70.240">
    <property type="match status" value="1"/>
</dbReference>
<dbReference type="Gene3D" id="3.30.70.2570">
    <property type="entry name" value="Elongation factor 4, C-terminal domain"/>
    <property type="match status" value="1"/>
</dbReference>
<dbReference type="Gene3D" id="3.30.70.870">
    <property type="entry name" value="Elongation Factor G (Translational Gtpase), domain 3"/>
    <property type="match status" value="1"/>
</dbReference>
<dbReference type="Gene3D" id="3.40.50.300">
    <property type="entry name" value="P-loop containing nucleotide triphosphate hydrolases"/>
    <property type="match status" value="1"/>
</dbReference>
<dbReference type="Gene3D" id="2.40.30.10">
    <property type="entry name" value="Translation factors"/>
    <property type="match status" value="1"/>
</dbReference>
<dbReference type="HAMAP" id="MF_03138">
    <property type="entry name" value="GUFP"/>
    <property type="match status" value="1"/>
</dbReference>
<dbReference type="HAMAP" id="MF_00071">
    <property type="entry name" value="LepA"/>
    <property type="match status" value="1"/>
</dbReference>
<dbReference type="InterPro" id="IPR006297">
    <property type="entry name" value="EF-4"/>
</dbReference>
<dbReference type="InterPro" id="IPR035647">
    <property type="entry name" value="EFG_III/V"/>
</dbReference>
<dbReference type="InterPro" id="IPR000640">
    <property type="entry name" value="EFG_V-like"/>
</dbReference>
<dbReference type="InterPro" id="IPR004161">
    <property type="entry name" value="EFTu-like_2"/>
</dbReference>
<dbReference type="InterPro" id="IPR031157">
    <property type="entry name" value="G_TR_CS"/>
</dbReference>
<dbReference type="InterPro" id="IPR027518">
    <property type="entry name" value="GUFP"/>
</dbReference>
<dbReference type="InterPro" id="IPR038363">
    <property type="entry name" value="LepA_C_sf"/>
</dbReference>
<dbReference type="InterPro" id="IPR013842">
    <property type="entry name" value="LepA_CTD"/>
</dbReference>
<dbReference type="InterPro" id="IPR035654">
    <property type="entry name" value="LepA_IV"/>
</dbReference>
<dbReference type="InterPro" id="IPR027417">
    <property type="entry name" value="P-loop_NTPase"/>
</dbReference>
<dbReference type="InterPro" id="IPR005225">
    <property type="entry name" value="Small_GTP-bd"/>
</dbReference>
<dbReference type="InterPro" id="IPR000795">
    <property type="entry name" value="T_Tr_GTP-bd_dom"/>
</dbReference>
<dbReference type="InterPro" id="IPR009000">
    <property type="entry name" value="Transl_B-barrel_sf"/>
</dbReference>
<dbReference type="NCBIfam" id="TIGR01393">
    <property type="entry name" value="lepA"/>
    <property type="match status" value="1"/>
</dbReference>
<dbReference type="NCBIfam" id="TIGR00231">
    <property type="entry name" value="small_GTP"/>
    <property type="match status" value="1"/>
</dbReference>
<dbReference type="PANTHER" id="PTHR43512:SF4">
    <property type="entry name" value="TRANSLATION FACTOR GUF1 HOMOLOG, CHLOROPLASTIC"/>
    <property type="match status" value="1"/>
</dbReference>
<dbReference type="PANTHER" id="PTHR43512">
    <property type="entry name" value="TRANSLATION FACTOR GUF1-RELATED"/>
    <property type="match status" value="1"/>
</dbReference>
<dbReference type="Pfam" id="PF00679">
    <property type="entry name" value="EFG_C"/>
    <property type="match status" value="1"/>
</dbReference>
<dbReference type="Pfam" id="PF00009">
    <property type="entry name" value="GTP_EFTU"/>
    <property type="match status" value="1"/>
</dbReference>
<dbReference type="Pfam" id="PF03144">
    <property type="entry name" value="GTP_EFTU_D2"/>
    <property type="match status" value="1"/>
</dbReference>
<dbReference type="Pfam" id="PF06421">
    <property type="entry name" value="LepA_C"/>
    <property type="match status" value="1"/>
</dbReference>
<dbReference type="PRINTS" id="PR00315">
    <property type="entry name" value="ELONGATNFCT"/>
</dbReference>
<dbReference type="SMART" id="SM00838">
    <property type="entry name" value="EFG_C"/>
    <property type="match status" value="1"/>
</dbReference>
<dbReference type="SUPFAM" id="SSF54980">
    <property type="entry name" value="EF-G C-terminal domain-like"/>
    <property type="match status" value="2"/>
</dbReference>
<dbReference type="SUPFAM" id="SSF52540">
    <property type="entry name" value="P-loop containing nucleoside triphosphate hydrolases"/>
    <property type="match status" value="1"/>
</dbReference>
<dbReference type="SUPFAM" id="SSF50447">
    <property type="entry name" value="Translation proteins"/>
    <property type="match status" value="1"/>
</dbReference>
<dbReference type="PROSITE" id="PS00301">
    <property type="entry name" value="G_TR_1"/>
    <property type="match status" value="1"/>
</dbReference>
<dbReference type="PROSITE" id="PS51722">
    <property type="entry name" value="G_TR_2"/>
    <property type="match status" value="1"/>
</dbReference>
<sequence>MTDVPVSRLRNFCIIAHIDHGKSTLADRLLQDTGTVAGRDMQEQFLDNMDLERERGITIKLQAARMNYTAADGESYVLNLIDTPGHVDFSYEVSRSLQACEGALLVVDASQGVEAQTLANVYLALENDLEIIPVLNKIDLPGSDPERIKEEIEAIIGLDTSTAIACSAKTGLGVSEIMQAVVDRIPPPADTLDEPTRALIFDSYYDSYRGVIVYFRVISGRISTKDKVLLMASKKSYELDEIGVMSPDQCEVNELHAGEVGYLAASIKAVADARVGDTITLLNAPADEPLPGYTEAKPMVFCGLFPTDADQYPDLREALDKLQLSDAALKYEPETSSAMGFGFRCGFLGLLHMEIVQERLEREYDLDLIVTAPSVIYKVNMIDGQMLMVDNPATLPDPQKRESIEEPYVRMEIYAPNEYNGTLMGLCQERRGEYIDMKYLTTERVTLIYELPLAEVVTDFFDQMKSRTKGYASMEYHLIGYRRNDLVRLDVLINAEKADPLTTIAHRDKAYSIGKGLVEKLKELIPRQQFKIPLQASIGSRIIASESISAMRKDVLAKCYGGDISRKKKLLKKQAKGKKRMKAMGKVDVPQEAFMAVLKLNQTS</sequence>
<proteinExistence type="inferred from homology"/>
<comment type="function">
    <text evidence="1">Required for accurate and efficient protein synthesis under certain stress conditions. May act as a fidelity factor of the translation reaction, by catalyzing a one-codon backward translocation of tRNAs on improperly translocated ribosomes. Back-translocation proceeds from a post-translocation (POST) complex to a pre-translocation (PRE) complex, thus giving elongation factor G a second chance to translocate the tRNAs correctly. Binds to ribosomes in a GTP-dependent manner.</text>
</comment>
<comment type="catalytic activity">
    <reaction evidence="1">
        <text>GTP + H2O = GDP + phosphate + H(+)</text>
        <dbReference type="Rhea" id="RHEA:19669"/>
        <dbReference type="ChEBI" id="CHEBI:15377"/>
        <dbReference type="ChEBI" id="CHEBI:15378"/>
        <dbReference type="ChEBI" id="CHEBI:37565"/>
        <dbReference type="ChEBI" id="CHEBI:43474"/>
        <dbReference type="ChEBI" id="CHEBI:58189"/>
        <dbReference type="EC" id="3.6.5.n1"/>
    </reaction>
</comment>
<comment type="subcellular location">
    <subcellularLocation>
        <location evidence="1">Cell inner membrane</location>
        <topology evidence="1">Peripheral membrane protein</topology>
        <orientation evidence="1">Cytoplasmic side</orientation>
    </subcellularLocation>
</comment>
<comment type="similarity">
    <text evidence="1">Belongs to the TRAFAC class translation factor GTPase superfamily. Classic translation factor GTPase family. LepA subfamily.</text>
</comment>
<protein>
    <recommendedName>
        <fullName evidence="1">Elongation factor 4</fullName>
        <shortName evidence="1">EF-4</shortName>
        <ecNumber evidence="1">3.6.5.n1</ecNumber>
    </recommendedName>
    <alternativeName>
        <fullName evidence="1">Ribosomal back-translocase LepA</fullName>
    </alternativeName>
</protein>
<name>LEPA_PROM3</name>
<accession>A2CBG9</accession>
<keyword id="KW-0997">Cell inner membrane</keyword>
<keyword id="KW-1003">Cell membrane</keyword>
<keyword id="KW-0342">GTP-binding</keyword>
<keyword id="KW-0378">Hydrolase</keyword>
<keyword id="KW-0472">Membrane</keyword>
<keyword id="KW-0547">Nucleotide-binding</keyword>
<keyword id="KW-0648">Protein biosynthesis</keyword>